<protein>
    <recommendedName>
        <fullName evidence="1">3-methyl-2-oxobutanoate hydroxymethyltransferase</fullName>
        <ecNumber evidence="1">2.1.2.11</ecNumber>
    </recommendedName>
    <alternativeName>
        <fullName evidence="1">Ketopantoate hydroxymethyltransferase</fullName>
        <shortName evidence="1">KPHMT</shortName>
    </alternativeName>
</protein>
<organism>
    <name type="scientific">Geobacillus thermodenitrificans (strain NG80-2)</name>
    <dbReference type="NCBI Taxonomy" id="420246"/>
    <lineage>
        <taxon>Bacteria</taxon>
        <taxon>Bacillati</taxon>
        <taxon>Bacillota</taxon>
        <taxon>Bacilli</taxon>
        <taxon>Bacillales</taxon>
        <taxon>Anoxybacillaceae</taxon>
        <taxon>Geobacillus</taxon>
    </lineage>
</organism>
<comment type="function">
    <text evidence="1">Catalyzes the reversible reaction in which hydroxymethyl group from 5,10-methylenetetrahydrofolate is transferred onto alpha-ketoisovalerate to form ketopantoate.</text>
</comment>
<comment type="catalytic activity">
    <reaction evidence="1">
        <text>3-methyl-2-oxobutanoate + (6R)-5,10-methylene-5,6,7,8-tetrahydrofolate + H2O = 2-dehydropantoate + (6S)-5,6,7,8-tetrahydrofolate</text>
        <dbReference type="Rhea" id="RHEA:11824"/>
        <dbReference type="ChEBI" id="CHEBI:11561"/>
        <dbReference type="ChEBI" id="CHEBI:11851"/>
        <dbReference type="ChEBI" id="CHEBI:15377"/>
        <dbReference type="ChEBI" id="CHEBI:15636"/>
        <dbReference type="ChEBI" id="CHEBI:57453"/>
        <dbReference type="EC" id="2.1.2.11"/>
    </reaction>
</comment>
<comment type="cofactor">
    <cofactor evidence="1">
        <name>Mg(2+)</name>
        <dbReference type="ChEBI" id="CHEBI:18420"/>
    </cofactor>
    <text evidence="1">Binds 1 Mg(2+) ion per subunit.</text>
</comment>
<comment type="pathway">
    <text evidence="1">Cofactor biosynthesis; (R)-pantothenate biosynthesis; (R)-pantoate from 3-methyl-2-oxobutanoate: step 1/2.</text>
</comment>
<comment type="subunit">
    <text evidence="1">Homodecamer; pentamer of dimers.</text>
</comment>
<comment type="subcellular location">
    <subcellularLocation>
        <location evidence="1">Cytoplasm</location>
    </subcellularLocation>
</comment>
<comment type="similarity">
    <text evidence="1">Belongs to the PanB family.</text>
</comment>
<name>PANB_GEOTN</name>
<keyword id="KW-0963">Cytoplasm</keyword>
<keyword id="KW-0460">Magnesium</keyword>
<keyword id="KW-0479">Metal-binding</keyword>
<keyword id="KW-0566">Pantothenate biosynthesis</keyword>
<keyword id="KW-0808">Transferase</keyword>
<dbReference type="EC" id="2.1.2.11" evidence="1"/>
<dbReference type="EMBL" id="CP000557">
    <property type="protein sequence ID" value="ABO67465.1"/>
    <property type="molecule type" value="Genomic_DNA"/>
</dbReference>
<dbReference type="RefSeq" id="WP_008879587.1">
    <property type="nucleotide sequence ID" value="NC_009328.1"/>
</dbReference>
<dbReference type="SMR" id="A4IQ61"/>
<dbReference type="KEGG" id="gtn:GTNG_2113"/>
<dbReference type="eggNOG" id="COG0413">
    <property type="taxonomic scope" value="Bacteria"/>
</dbReference>
<dbReference type="HOGENOM" id="CLU_036645_1_0_9"/>
<dbReference type="UniPathway" id="UPA00028">
    <property type="reaction ID" value="UER00003"/>
</dbReference>
<dbReference type="Proteomes" id="UP000001578">
    <property type="component" value="Chromosome"/>
</dbReference>
<dbReference type="GO" id="GO:0005737">
    <property type="term" value="C:cytoplasm"/>
    <property type="evidence" value="ECO:0007669"/>
    <property type="project" value="UniProtKB-SubCell"/>
</dbReference>
<dbReference type="GO" id="GO:0003864">
    <property type="term" value="F:3-methyl-2-oxobutanoate hydroxymethyltransferase activity"/>
    <property type="evidence" value="ECO:0007669"/>
    <property type="project" value="UniProtKB-UniRule"/>
</dbReference>
<dbReference type="GO" id="GO:0000287">
    <property type="term" value="F:magnesium ion binding"/>
    <property type="evidence" value="ECO:0007669"/>
    <property type="project" value="TreeGrafter"/>
</dbReference>
<dbReference type="GO" id="GO:0015940">
    <property type="term" value="P:pantothenate biosynthetic process"/>
    <property type="evidence" value="ECO:0007669"/>
    <property type="project" value="UniProtKB-UniRule"/>
</dbReference>
<dbReference type="CDD" id="cd06557">
    <property type="entry name" value="KPHMT-like"/>
    <property type="match status" value="1"/>
</dbReference>
<dbReference type="FunFam" id="3.20.20.60:FF:000003">
    <property type="entry name" value="3-methyl-2-oxobutanoate hydroxymethyltransferase"/>
    <property type="match status" value="1"/>
</dbReference>
<dbReference type="Gene3D" id="3.20.20.60">
    <property type="entry name" value="Phosphoenolpyruvate-binding domains"/>
    <property type="match status" value="1"/>
</dbReference>
<dbReference type="HAMAP" id="MF_00156">
    <property type="entry name" value="PanB"/>
    <property type="match status" value="1"/>
</dbReference>
<dbReference type="InterPro" id="IPR003700">
    <property type="entry name" value="Pantoate_hydroxy_MeTrfase"/>
</dbReference>
<dbReference type="InterPro" id="IPR015813">
    <property type="entry name" value="Pyrv/PenolPyrv_kinase-like_dom"/>
</dbReference>
<dbReference type="InterPro" id="IPR040442">
    <property type="entry name" value="Pyrv_kinase-like_dom_sf"/>
</dbReference>
<dbReference type="NCBIfam" id="TIGR00222">
    <property type="entry name" value="panB"/>
    <property type="match status" value="1"/>
</dbReference>
<dbReference type="NCBIfam" id="NF001452">
    <property type="entry name" value="PRK00311.1"/>
    <property type="match status" value="1"/>
</dbReference>
<dbReference type="PANTHER" id="PTHR20881">
    <property type="entry name" value="3-METHYL-2-OXOBUTANOATE HYDROXYMETHYLTRANSFERASE"/>
    <property type="match status" value="1"/>
</dbReference>
<dbReference type="PANTHER" id="PTHR20881:SF0">
    <property type="entry name" value="3-METHYL-2-OXOBUTANOATE HYDROXYMETHYLTRANSFERASE"/>
    <property type="match status" value="1"/>
</dbReference>
<dbReference type="Pfam" id="PF02548">
    <property type="entry name" value="Pantoate_transf"/>
    <property type="match status" value="1"/>
</dbReference>
<dbReference type="PIRSF" id="PIRSF000388">
    <property type="entry name" value="Pantoate_hydroxy_MeTrfase"/>
    <property type="match status" value="1"/>
</dbReference>
<dbReference type="SUPFAM" id="SSF51621">
    <property type="entry name" value="Phosphoenolpyruvate/pyruvate domain"/>
    <property type="match status" value="1"/>
</dbReference>
<gene>
    <name evidence="1" type="primary">panB</name>
    <name type="ordered locus">GTNG_2113</name>
</gene>
<accession>A4IQ61</accession>
<evidence type="ECO:0000255" key="1">
    <source>
        <dbReference type="HAMAP-Rule" id="MF_00156"/>
    </source>
</evidence>
<proteinExistence type="inferred from homology"/>
<sequence>MKTKADFFRMKQADEPIVMVTAYDFPSAKLVEQAGVDMILVGDSLGMVVLGYDSTIPVTVDDMIHHTKAVRRGAPNTFIVTDMPFMSYHASKEEALQNARRIMQQSGANAVKVEGADEVVETIAALTKAGVPVVAHLGLTPQSVGVLGGYKVQGKDAESAKKLLNDAKQCEQAGAIALVLECVPKQLGAAVARELTIPVIGIGAGAEVDGQVLVYHDLLGYGVNRVPKFVKQYAAIQETIVEALANYIADVKLRQFPEPAHTFTMKEEEWVALYGGKQS</sequence>
<feature type="chain" id="PRO_0000297274" description="3-methyl-2-oxobutanoate hydroxymethyltransferase">
    <location>
        <begin position="1"/>
        <end position="279"/>
    </location>
</feature>
<feature type="active site" description="Proton acceptor" evidence="1">
    <location>
        <position position="181"/>
    </location>
</feature>
<feature type="binding site" evidence="1">
    <location>
        <begin position="43"/>
        <end position="44"/>
    </location>
    <ligand>
        <name>3-methyl-2-oxobutanoate</name>
        <dbReference type="ChEBI" id="CHEBI:11851"/>
    </ligand>
</feature>
<feature type="binding site" evidence="1">
    <location>
        <position position="43"/>
    </location>
    <ligand>
        <name>Mg(2+)</name>
        <dbReference type="ChEBI" id="CHEBI:18420"/>
    </ligand>
</feature>
<feature type="binding site" evidence="1">
    <location>
        <position position="82"/>
    </location>
    <ligand>
        <name>3-methyl-2-oxobutanoate</name>
        <dbReference type="ChEBI" id="CHEBI:11851"/>
    </ligand>
</feature>
<feature type="binding site" evidence="1">
    <location>
        <position position="82"/>
    </location>
    <ligand>
        <name>Mg(2+)</name>
        <dbReference type="ChEBI" id="CHEBI:18420"/>
    </ligand>
</feature>
<feature type="binding site" evidence="1">
    <location>
        <position position="112"/>
    </location>
    <ligand>
        <name>3-methyl-2-oxobutanoate</name>
        <dbReference type="ChEBI" id="CHEBI:11851"/>
    </ligand>
</feature>
<feature type="binding site" evidence="1">
    <location>
        <position position="114"/>
    </location>
    <ligand>
        <name>Mg(2+)</name>
        <dbReference type="ChEBI" id="CHEBI:18420"/>
    </ligand>
</feature>
<reference key="1">
    <citation type="journal article" date="2007" name="Proc. Natl. Acad. Sci. U.S.A.">
        <title>Genome and proteome of long-chain alkane degrading Geobacillus thermodenitrificans NG80-2 isolated from a deep-subsurface oil reservoir.</title>
        <authorList>
            <person name="Feng L."/>
            <person name="Wang W."/>
            <person name="Cheng J."/>
            <person name="Ren Y."/>
            <person name="Zhao G."/>
            <person name="Gao C."/>
            <person name="Tang Y."/>
            <person name="Liu X."/>
            <person name="Han W."/>
            <person name="Peng X."/>
            <person name="Liu R."/>
            <person name="Wang L."/>
        </authorList>
    </citation>
    <scope>NUCLEOTIDE SEQUENCE [LARGE SCALE GENOMIC DNA]</scope>
    <source>
        <strain>NG80-2</strain>
    </source>
</reference>